<organism>
    <name type="scientific">Pseudomonas syringae pv. tomato (strain ATCC BAA-871 / DC3000)</name>
    <dbReference type="NCBI Taxonomy" id="223283"/>
    <lineage>
        <taxon>Bacteria</taxon>
        <taxon>Pseudomonadati</taxon>
        <taxon>Pseudomonadota</taxon>
        <taxon>Gammaproteobacteria</taxon>
        <taxon>Pseudomonadales</taxon>
        <taxon>Pseudomonadaceae</taxon>
        <taxon>Pseudomonas</taxon>
    </lineage>
</organism>
<feature type="chain" id="PRO_0000122103" description="Serine--tRNA ligase">
    <location>
        <begin position="1"/>
        <end position="426"/>
    </location>
</feature>
<feature type="binding site" evidence="1">
    <location>
        <begin position="233"/>
        <end position="235"/>
    </location>
    <ligand>
        <name>L-serine</name>
        <dbReference type="ChEBI" id="CHEBI:33384"/>
    </ligand>
</feature>
<feature type="binding site" evidence="1">
    <location>
        <begin position="264"/>
        <end position="266"/>
    </location>
    <ligand>
        <name>ATP</name>
        <dbReference type="ChEBI" id="CHEBI:30616"/>
    </ligand>
</feature>
<feature type="binding site" evidence="1">
    <location>
        <position position="287"/>
    </location>
    <ligand>
        <name>L-serine</name>
        <dbReference type="ChEBI" id="CHEBI:33384"/>
    </ligand>
</feature>
<feature type="binding site" evidence="1">
    <location>
        <begin position="351"/>
        <end position="354"/>
    </location>
    <ligand>
        <name>ATP</name>
        <dbReference type="ChEBI" id="CHEBI:30616"/>
    </ligand>
</feature>
<feature type="binding site" evidence="1">
    <location>
        <position position="387"/>
    </location>
    <ligand>
        <name>L-serine</name>
        <dbReference type="ChEBI" id="CHEBI:33384"/>
    </ligand>
</feature>
<dbReference type="EC" id="6.1.1.11" evidence="1"/>
<dbReference type="EMBL" id="AE016853">
    <property type="protein sequence ID" value="AAO56823.1"/>
    <property type="molecule type" value="Genomic_DNA"/>
</dbReference>
<dbReference type="RefSeq" id="NP_793128.1">
    <property type="nucleotide sequence ID" value="NC_004578.1"/>
</dbReference>
<dbReference type="RefSeq" id="WP_011104505.1">
    <property type="nucleotide sequence ID" value="NC_004578.1"/>
</dbReference>
<dbReference type="SMR" id="Q87ZS9"/>
<dbReference type="STRING" id="223283.PSPTO_3345"/>
<dbReference type="GeneID" id="1185004"/>
<dbReference type="KEGG" id="pst:PSPTO_3345"/>
<dbReference type="PATRIC" id="fig|223283.9.peg.3424"/>
<dbReference type="eggNOG" id="COG0172">
    <property type="taxonomic scope" value="Bacteria"/>
</dbReference>
<dbReference type="HOGENOM" id="CLU_023797_1_1_6"/>
<dbReference type="OrthoDB" id="9804647at2"/>
<dbReference type="PhylomeDB" id="Q87ZS9"/>
<dbReference type="UniPathway" id="UPA00906">
    <property type="reaction ID" value="UER00895"/>
</dbReference>
<dbReference type="Proteomes" id="UP000002515">
    <property type="component" value="Chromosome"/>
</dbReference>
<dbReference type="GO" id="GO:0005737">
    <property type="term" value="C:cytoplasm"/>
    <property type="evidence" value="ECO:0007669"/>
    <property type="project" value="UniProtKB-SubCell"/>
</dbReference>
<dbReference type="GO" id="GO:0005524">
    <property type="term" value="F:ATP binding"/>
    <property type="evidence" value="ECO:0007669"/>
    <property type="project" value="UniProtKB-UniRule"/>
</dbReference>
<dbReference type="GO" id="GO:0004828">
    <property type="term" value="F:serine-tRNA ligase activity"/>
    <property type="evidence" value="ECO:0007669"/>
    <property type="project" value="UniProtKB-UniRule"/>
</dbReference>
<dbReference type="GO" id="GO:0016260">
    <property type="term" value="P:selenocysteine biosynthetic process"/>
    <property type="evidence" value="ECO:0007669"/>
    <property type="project" value="UniProtKB-UniRule"/>
</dbReference>
<dbReference type="GO" id="GO:0006434">
    <property type="term" value="P:seryl-tRNA aminoacylation"/>
    <property type="evidence" value="ECO:0007669"/>
    <property type="project" value="UniProtKB-UniRule"/>
</dbReference>
<dbReference type="CDD" id="cd00770">
    <property type="entry name" value="SerRS_core"/>
    <property type="match status" value="1"/>
</dbReference>
<dbReference type="Gene3D" id="3.30.930.10">
    <property type="entry name" value="Bira Bifunctional Protein, Domain 2"/>
    <property type="match status" value="1"/>
</dbReference>
<dbReference type="Gene3D" id="1.10.287.40">
    <property type="entry name" value="Serine-tRNA synthetase, tRNA binding domain"/>
    <property type="match status" value="1"/>
</dbReference>
<dbReference type="HAMAP" id="MF_00176">
    <property type="entry name" value="Ser_tRNA_synth_type1"/>
    <property type="match status" value="1"/>
</dbReference>
<dbReference type="InterPro" id="IPR002314">
    <property type="entry name" value="aa-tRNA-synt_IIb"/>
</dbReference>
<dbReference type="InterPro" id="IPR006195">
    <property type="entry name" value="aa-tRNA-synth_II"/>
</dbReference>
<dbReference type="InterPro" id="IPR045864">
    <property type="entry name" value="aa-tRNA-synth_II/BPL/LPL"/>
</dbReference>
<dbReference type="InterPro" id="IPR002317">
    <property type="entry name" value="Ser-tRNA-ligase_type_1"/>
</dbReference>
<dbReference type="InterPro" id="IPR015866">
    <property type="entry name" value="Ser-tRNA-synth_1_N"/>
</dbReference>
<dbReference type="InterPro" id="IPR042103">
    <property type="entry name" value="SerRS_1_N_sf"/>
</dbReference>
<dbReference type="InterPro" id="IPR033729">
    <property type="entry name" value="SerRS_core"/>
</dbReference>
<dbReference type="InterPro" id="IPR010978">
    <property type="entry name" value="tRNA-bd_arm"/>
</dbReference>
<dbReference type="NCBIfam" id="TIGR00414">
    <property type="entry name" value="serS"/>
    <property type="match status" value="1"/>
</dbReference>
<dbReference type="PANTHER" id="PTHR43697:SF1">
    <property type="entry name" value="SERINE--TRNA LIGASE"/>
    <property type="match status" value="1"/>
</dbReference>
<dbReference type="PANTHER" id="PTHR43697">
    <property type="entry name" value="SERYL-TRNA SYNTHETASE"/>
    <property type="match status" value="1"/>
</dbReference>
<dbReference type="Pfam" id="PF02403">
    <property type="entry name" value="Seryl_tRNA_N"/>
    <property type="match status" value="1"/>
</dbReference>
<dbReference type="Pfam" id="PF00587">
    <property type="entry name" value="tRNA-synt_2b"/>
    <property type="match status" value="1"/>
</dbReference>
<dbReference type="PIRSF" id="PIRSF001529">
    <property type="entry name" value="Ser-tRNA-synth_IIa"/>
    <property type="match status" value="1"/>
</dbReference>
<dbReference type="PRINTS" id="PR00981">
    <property type="entry name" value="TRNASYNTHSER"/>
</dbReference>
<dbReference type="SUPFAM" id="SSF55681">
    <property type="entry name" value="Class II aaRS and biotin synthetases"/>
    <property type="match status" value="1"/>
</dbReference>
<dbReference type="SUPFAM" id="SSF46589">
    <property type="entry name" value="tRNA-binding arm"/>
    <property type="match status" value="1"/>
</dbReference>
<dbReference type="PROSITE" id="PS50862">
    <property type="entry name" value="AA_TRNA_LIGASE_II"/>
    <property type="match status" value="1"/>
</dbReference>
<protein>
    <recommendedName>
        <fullName evidence="1">Serine--tRNA ligase</fullName>
        <ecNumber evidence="1">6.1.1.11</ecNumber>
    </recommendedName>
    <alternativeName>
        <fullName evidence="1">Seryl-tRNA synthetase</fullName>
        <shortName evidence="1">SerRS</shortName>
    </alternativeName>
    <alternativeName>
        <fullName evidence="1">Seryl-tRNA(Ser/Sec) synthetase</fullName>
    </alternativeName>
</protein>
<gene>
    <name evidence="1" type="primary">serS</name>
    <name type="ordered locus">PSPTO_3345</name>
</gene>
<name>SYS_PSESM</name>
<sequence length="426" mass="47199">MLDSKLLRTQLQDVADRLASRGFTLDVARIESLEAQRKVVQTRTEQLQAERNARSKSIGQAKQRGEDIAPLMADVERMGNELSEGKVELDAIQAELDALVLNIPNLPHESVPVGADEEGNVEVRRWGTPTAFGFEVKDHVALGEKFGWLDFETAAKLSGARFALLRGPIARLHRALAQFMINLHINEHGYEETYTPYLVQAPALQGTGQLPKFEEDLFKISREGEADLYLIPTAEVSLTNIVSGEILDAKQLPLKFVAHTPCFRSEAGASGRDTRGMIRQHQFDKVEMVQIVAPDDSMAALESLTGNAERVLQLLELPYRTLALCTGDMGFSAVKTYDLEVWIPSQDKYREISSCSNCGDFQARRMQARWRNPETGKPELVHTLNGSGLAVGRTLVAVLENYQQADGSIRVPEVLKPYMGGLEVIG</sequence>
<comment type="function">
    <text evidence="1">Catalyzes the attachment of serine to tRNA(Ser). Is also able to aminoacylate tRNA(Sec) with serine, to form the misacylated tRNA L-seryl-tRNA(Sec), which will be further converted into selenocysteinyl-tRNA(Sec).</text>
</comment>
<comment type="catalytic activity">
    <reaction evidence="1">
        <text>tRNA(Ser) + L-serine + ATP = L-seryl-tRNA(Ser) + AMP + diphosphate + H(+)</text>
        <dbReference type="Rhea" id="RHEA:12292"/>
        <dbReference type="Rhea" id="RHEA-COMP:9669"/>
        <dbReference type="Rhea" id="RHEA-COMP:9703"/>
        <dbReference type="ChEBI" id="CHEBI:15378"/>
        <dbReference type="ChEBI" id="CHEBI:30616"/>
        <dbReference type="ChEBI" id="CHEBI:33019"/>
        <dbReference type="ChEBI" id="CHEBI:33384"/>
        <dbReference type="ChEBI" id="CHEBI:78442"/>
        <dbReference type="ChEBI" id="CHEBI:78533"/>
        <dbReference type="ChEBI" id="CHEBI:456215"/>
        <dbReference type="EC" id="6.1.1.11"/>
    </reaction>
</comment>
<comment type="catalytic activity">
    <reaction evidence="1">
        <text>tRNA(Sec) + L-serine + ATP = L-seryl-tRNA(Sec) + AMP + diphosphate + H(+)</text>
        <dbReference type="Rhea" id="RHEA:42580"/>
        <dbReference type="Rhea" id="RHEA-COMP:9742"/>
        <dbReference type="Rhea" id="RHEA-COMP:10128"/>
        <dbReference type="ChEBI" id="CHEBI:15378"/>
        <dbReference type="ChEBI" id="CHEBI:30616"/>
        <dbReference type="ChEBI" id="CHEBI:33019"/>
        <dbReference type="ChEBI" id="CHEBI:33384"/>
        <dbReference type="ChEBI" id="CHEBI:78442"/>
        <dbReference type="ChEBI" id="CHEBI:78533"/>
        <dbReference type="ChEBI" id="CHEBI:456215"/>
        <dbReference type="EC" id="6.1.1.11"/>
    </reaction>
</comment>
<comment type="pathway">
    <text evidence="1">Aminoacyl-tRNA biosynthesis; selenocysteinyl-tRNA(Sec) biosynthesis; L-seryl-tRNA(Sec) from L-serine and tRNA(Sec): step 1/1.</text>
</comment>
<comment type="subunit">
    <text evidence="1">Homodimer. The tRNA molecule binds across the dimer.</text>
</comment>
<comment type="subcellular location">
    <subcellularLocation>
        <location evidence="1">Cytoplasm</location>
    </subcellularLocation>
</comment>
<comment type="domain">
    <text evidence="1">Consists of two distinct domains, a catalytic core and a N-terminal extension that is involved in tRNA binding.</text>
</comment>
<comment type="similarity">
    <text evidence="1">Belongs to the class-II aminoacyl-tRNA synthetase family. Type-1 seryl-tRNA synthetase subfamily.</text>
</comment>
<keyword id="KW-0030">Aminoacyl-tRNA synthetase</keyword>
<keyword id="KW-0067">ATP-binding</keyword>
<keyword id="KW-0963">Cytoplasm</keyword>
<keyword id="KW-0436">Ligase</keyword>
<keyword id="KW-0547">Nucleotide-binding</keyword>
<keyword id="KW-0648">Protein biosynthesis</keyword>
<keyword id="KW-1185">Reference proteome</keyword>
<evidence type="ECO:0000255" key="1">
    <source>
        <dbReference type="HAMAP-Rule" id="MF_00176"/>
    </source>
</evidence>
<proteinExistence type="inferred from homology"/>
<reference key="1">
    <citation type="journal article" date="2003" name="Proc. Natl. Acad. Sci. U.S.A.">
        <title>The complete genome sequence of the Arabidopsis and tomato pathogen Pseudomonas syringae pv. tomato DC3000.</title>
        <authorList>
            <person name="Buell C.R."/>
            <person name="Joardar V."/>
            <person name="Lindeberg M."/>
            <person name="Selengut J."/>
            <person name="Paulsen I.T."/>
            <person name="Gwinn M.L."/>
            <person name="Dodson R.J."/>
            <person name="DeBoy R.T."/>
            <person name="Durkin A.S."/>
            <person name="Kolonay J.F."/>
            <person name="Madupu R."/>
            <person name="Daugherty S.C."/>
            <person name="Brinkac L.M."/>
            <person name="Beanan M.J."/>
            <person name="Haft D.H."/>
            <person name="Nelson W.C."/>
            <person name="Davidsen T.M."/>
            <person name="Zafar N."/>
            <person name="Zhou L."/>
            <person name="Liu J."/>
            <person name="Yuan Q."/>
            <person name="Khouri H.M."/>
            <person name="Fedorova N.B."/>
            <person name="Tran B."/>
            <person name="Russell D."/>
            <person name="Berry K.J."/>
            <person name="Utterback T.R."/>
            <person name="Van Aken S.E."/>
            <person name="Feldblyum T.V."/>
            <person name="D'Ascenzo M."/>
            <person name="Deng W.-L."/>
            <person name="Ramos A.R."/>
            <person name="Alfano J.R."/>
            <person name="Cartinhour S."/>
            <person name="Chatterjee A.K."/>
            <person name="Delaney T.P."/>
            <person name="Lazarowitz S.G."/>
            <person name="Martin G.B."/>
            <person name="Schneider D.J."/>
            <person name="Tang X."/>
            <person name="Bender C.L."/>
            <person name="White O."/>
            <person name="Fraser C.M."/>
            <person name="Collmer A."/>
        </authorList>
    </citation>
    <scope>NUCLEOTIDE SEQUENCE [LARGE SCALE GENOMIC DNA]</scope>
    <source>
        <strain>ATCC BAA-871 / DC3000</strain>
    </source>
</reference>
<accession>Q87ZS9</accession>